<comment type="function">
    <text evidence="1">Activates expression of the rhaBAD and rhaT operons.</text>
</comment>
<comment type="subunit">
    <text evidence="1">Binds DNA as a dimer.</text>
</comment>
<comment type="subcellular location">
    <subcellularLocation>
        <location evidence="1">Cytoplasm</location>
    </subcellularLocation>
</comment>
<keyword id="KW-0010">Activator</keyword>
<keyword id="KW-0963">Cytoplasm</keyword>
<keyword id="KW-0238">DNA-binding</keyword>
<keyword id="KW-1185">Reference proteome</keyword>
<keyword id="KW-0677">Repeat</keyword>
<keyword id="KW-0684">Rhamnose metabolism</keyword>
<keyword id="KW-0804">Transcription</keyword>
<keyword id="KW-0805">Transcription regulation</keyword>
<evidence type="ECO:0000255" key="1">
    <source>
        <dbReference type="HAMAP-Rule" id="MF_01534"/>
    </source>
</evidence>
<feature type="chain" id="PRO_1000068700" description="HTH-type transcriptional activator RhaS">
    <location>
        <begin position="1"/>
        <end position="278"/>
    </location>
</feature>
<feature type="domain" description="HTH araC/xylS-type" evidence="1">
    <location>
        <begin position="174"/>
        <end position="272"/>
    </location>
</feature>
<feature type="DNA-binding region" description="H-T-H motif" evidence="1">
    <location>
        <begin position="191"/>
        <end position="212"/>
    </location>
</feature>
<feature type="DNA-binding region" description="H-T-H motif" evidence="1">
    <location>
        <begin position="239"/>
        <end position="262"/>
    </location>
</feature>
<feature type="site" description="Interaction with sigma-70" evidence="1">
    <location>
        <position position="241"/>
    </location>
</feature>
<feature type="site" description="Interaction with sigma-70" evidence="1">
    <location>
        <position position="250"/>
    </location>
</feature>
<accession>A7ZUB7</accession>
<dbReference type="EMBL" id="CP000800">
    <property type="protein sequence ID" value="ABV20583.1"/>
    <property type="molecule type" value="Genomic_DNA"/>
</dbReference>
<dbReference type="RefSeq" id="WP_000217140.1">
    <property type="nucleotide sequence ID" value="NC_009801.1"/>
</dbReference>
<dbReference type="SMR" id="A7ZUB7"/>
<dbReference type="KEGG" id="ecw:EcE24377A_4437"/>
<dbReference type="HOGENOM" id="CLU_000445_88_5_6"/>
<dbReference type="Proteomes" id="UP000001122">
    <property type="component" value="Chromosome"/>
</dbReference>
<dbReference type="GO" id="GO:0005737">
    <property type="term" value="C:cytoplasm"/>
    <property type="evidence" value="ECO:0007669"/>
    <property type="project" value="UniProtKB-SubCell"/>
</dbReference>
<dbReference type="GO" id="GO:0003700">
    <property type="term" value="F:DNA-binding transcription factor activity"/>
    <property type="evidence" value="ECO:0007669"/>
    <property type="project" value="UniProtKB-UniRule"/>
</dbReference>
<dbReference type="GO" id="GO:0043565">
    <property type="term" value="F:sequence-specific DNA binding"/>
    <property type="evidence" value="ECO:0007669"/>
    <property type="project" value="InterPro"/>
</dbReference>
<dbReference type="GO" id="GO:0045893">
    <property type="term" value="P:positive regulation of DNA-templated transcription"/>
    <property type="evidence" value="ECO:0007669"/>
    <property type="project" value="UniProtKB-UniRule"/>
</dbReference>
<dbReference type="GO" id="GO:0019299">
    <property type="term" value="P:rhamnose metabolic process"/>
    <property type="evidence" value="ECO:0007669"/>
    <property type="project" value="UniProtKB-UniRule"/>
</dbReference>
<dbReference type="CDD" id="cd06977">
    <property type="entry name" value="cupin_RhaR_RhaS-like_N"/>
    <property type="match status" value="1"/>
</dbReference>
<dbReference type="FunFam" id="1.10.10.60:FF:000181">
    <property type="entry name" value="HTH-type transcriptional activator RhaS"/>
    <property type="match status" value="1"/>
</dbReference>
<dbReference type="FunFam" id="2.60.120.10:FF:000041">
    <property type="entry name" value="HTH-type transcriptional activator RhaS"/>
    <property type="match status" value="1"/>
</dbReference>
<dbReference type="Gene3D" id="1.10.10.60">
    <property type="entry name" value="Homeodomain-like"/>
    <property type="match status" value="1"/>
</dbReference>
<dbReference type="Gene3D" id="2.60.120.10">
    <property type="entry name" value="Jelly Rolls"/>
    <property type="match status" value="1"/>
</dbReference>
<dbReference type="HAMAP" id="MF_01534">
    <property type="entry name" value="HTH_type_RhaS"/>
    <property type="match status" value="1"/>
</dbReference>
<dbReference type="InterPro" id="IPR003313">
    <property type="entry name" value="AraC-bd"/>
</dbReference>
<dbReference type="InterPro" id="IPR050204">
    <property type="entry name" value="AraC_XylS_family_regulators"/>
</dbReference>
<dbReference type="InterPro" id="IPR009057">
    <property type="entry name" value="Homeodomain-like_sf"/>
</dbReference>
<dbReference type="InterPro" id="IPR037923">
    <property type="entry name" value="HTH-like"/>
</dbReference>
<dbReference type="InterPro" id="IPR018060">
    <property type="entry name" value="HTH_AraC"/>
</dbReference>
<dbReference type="InterPro" id="IPR018062">
    <property type="entry name" value="HTH_AraC-typ_CS"/>
</dbReference>
<dbReference type="InterPro" id="IPR047220">
    <property type="entry name" value="RhaR_RhaS-like_N"/>
</dbReference>
<dbReference type="InterPro" id="IPR014710">
    <property type="entry name" value="RmlC-like_jellyroll"/>
</dbReference>
<dbReference type="InterPro" id="IPR020449">
    <property type="entry name" value="Tscrpt_reg_AraC-type_HTH"/>
</dbReference>
<dbReference type="InterPro" id="IPR023609">
    <property type="entry name" value="Tscrpt_reg_HTH_RhaS"/>
</dbReference>
<dbReference type="NCBIfam" id="NF010028">
    <property type="entry name" value="PRK13503.1"/>
    <property type="match status" value="1"/>
</dbReference>
<dbReference type="PANTHER" id="PTHR46796:SF13">
    <property type="entry name" value="HTH-TYPE TRANSCRIPTIONAL ACTIVATOR RHAS"/>
    <property type="match status" value="1"/>
</dbReference>
<dbReference type="PANTHER" id="PTHR46796">
    <property type="entry name" value="HTH-TYPE TRANSCRIPTIONAL ACTIVATOR RHAS-RELATED"/>
    <property type="match status" value="1"/>
</dbReference>
<dbReference type="Pfam" id="PF02311">
    <property type="entry name" value="AraC_binding"/>
    <property type="match status" value="1"/>
</dbReference>
<dbReference type="Pfam" id="PF12833">
    <property type="entry name" value="HTH_18"/>
    <property type="match status" value="1"/>
</dbReference>
<dbReference type="PRINTS" id="PR00032">
    <property type="entry name" value="HTHARAC"/>
</dbReference>
<dbReference type="SMART" id="SM00342">
    <property type="entry name" value="HTH_ARAC"/>
    <property type="match status" value="1"/>
</dbReference>
<dbReference type="SUPFAM" id="SSF46689">
    <property type="entry name" value="Homeodomain-like"/>
    <property type="match status" value="2"/>
</dbReference>
<dbReference type="SUPFAM" id="SSF51215">
    <property type="entry name" value="Regulatory protein AraC"/>
    <property type="match status" value="1"/>
</dbReference>
<dbReference type="PROSITE" id="PS00041">
    <property type="entry name" value="HTH_ARAC_FAMILY_1"/>
    <property type="match status" value="1"/>
</dbReference>
<dbReference type="PROSITE" id="PS01124">
    <property type="entry name" value="HTH_ARAC_FAMILY_2"/>
    <property type="match status" value="1"/>
</dbReference>
<sequence length="278" mass="32315">MTVLHSVDFFPSGNASVAIEPRLPQADFPEHHHDFHEIVIVEHGTGIHVFNGQPYTITGGTVCFVRDHDRHLYEHTDNLCLTNVLYRSPDRFQFLAGLNQLLPQELDGQYPSHWRVNHSVLQQVRQLVAQMEQQEGENDLPSTASREILFMQLLLLLRKSSLQENLENSASRLNLLLAWLEDHFADEVNWDAVAEQFSLSLRTLHRQLKQQTGVTPQRYLNRLRLMKARHLLRHSEASVTDIAYRCGFSDSNHFSTLFRREFNWSPRDIRQGRDGFLQ</sequence>
<reference key="1">
    <citation type="journal article" date="2008" name="J. Bacteriol.">
        <title>The pangenome structure of Escherichia coli: comparative genomic analysis of E. coli commensal and pathogenic isolates.</title>
        <authorList>
            <person name="Rasko D.A."/>
            <person name="Rosovitz M.J."/>
            <person name="Myers G.S.A."/>
            <person name="Mongodin E.F."/>
            <person name="Fricke W.F."/>
            <person name="Gajer P."/>
            <person name="Crabtree J."/>
            <person name="Sebaihia M."/>
            <person name="Thomson N.R."/>
            <person name="Chaudhuri R."/>
            <person name="Henderson I.R."/>
            <person name="Sperandio V."/>
            <person name="Ravel J."/>
        </authorList>
    </citation>
    <scope>NUCLEOTIDE SEQUENCE [LARGE SCALE GENOMIC DNA]</scope>
    <source>
        <strain>E24377A / ETEC</strain>
    </source>
</reference>
<proteinExistence type="inferred from homology"/>
<gene>
    <name evidence="1" type="primary">rhaS</name>
    <name type="ordered locus">EcE24377A_4437</name>
</gene>
<protein>
    <recommendedName>
        <fullName evidence="1">HTH-type transcriptional activator RhaS</fullName>
    </recommendedName>
    <alternativeName>
        <fullName evidence="1">L-rhamnose operon regulatory protein RhaS</fullName>
    </alternativeName>
</protein>
<name>RHAS_ECO24</name>
<organism>
    <name type="scientific">Escherichia coli O139:H28 (strain E24377A / ETEC)</name>
    <dbReference type="NCBI Taxonomy" id="331111"/>
    <lineage>
        <taxon>Bacteria</taxon>
        <taxon>Pseudomonadati</taxon>
        <taxon>Pseudomonadota</taxon>
        <taxon>Gammaproteobacteria</taxon>
        <taxon>Enterobacterales</taxon>
        <taxon>Enterobacteriaceae</taxon>
        <taxon>Escherichia</taxon>
    </lineage>
</organism>